<name>ASB7_PONAB</name>
<accession>Q5RCK5</accession>
<reference key="1">
    <citation type="submission" date="2004-11" db="EMBL/GenBank/DDBJ databases">
        <authorList>
            <consortium name="The German cDNA consortium"/>
        </authorList>
    </citation>
    <scope>NUCLEOTIDE SEQUENCE [LARGE SCALE MRNA]</scope>
    <source>
        <tissue>Kidney</tissue>
    </source>
</reference>
<sequence length="318" mass="35925">MLHHHCRRNPELQEESQIQAAVAAGDVHTVRKMLEQGYSPNGRDANGWTLLHFSAARGKERCVRVFLEHGADPTVKDLIGGFTALHYAAMHGRARIARLMLESEYRSDIINAKSNDGWTPLHVAAHYGRDSFVRLLLEFKAEVDPLSDKGTTPLQLAIIRERSSCVKILLDHNANIDIQNGFLLRYAVIKSNHSYCRMFLQRGADTNLGRLEDGQTPLHLSALRDDVLCARMLYNYGADTNTRNYEGQTPLAVSISISGSSRPCLDFLQEVTRQPRNLQDLCRIKIRQCIGLQNLKLLDELPIAKVMKDYLKHKSDDI</sequence>
<protein>
    <recommendedName>
        <fullName>Ankyrin repeat and SOCS box protein 7</fullName>
        <shortName>ASB-7</shortName>
    </recommendedName>
</protein>
<keyword id="KW-0040">ANK repeat</keyword>
<keyword id="KW-1185">Reference proteome</keyword>
<keyword id="KW-0677">Repeat</keyword>
<keyword id="KW-0833">Ubl conjugation pathway</keyword>
<feature type="chain" id="PRO_0000285851" description="Ankyrin repeat and SOCS box protein 7">
    <location>
        <begin position="1"/>
        <end position="318"/>
    </location>
</feature>
<feature type="repeat" description="ANK 1">
    <location>
        <begin position="13"/>
        <end position="42"/>
    </location>
</feature>
<feature type="repeat" description="ANK 2">
    <location>
        <begin position="46"/>
        <end position="75"/>
    </location>
</feature>
<feature type="repeat" description="ANK 3">
    <location>
        <begin position="80"/>
        <end position="109"/>
    </location>
</feature>
<feature type="repeat" description="ANK 4">
    <location>
        <begin position="116"/>
        <end position="145"/>
    </location>
</feature>
<feature type="repeat" description="ANK 5">
    <location>
        <begin position="149"/>
        <end position="178"/>
    </location>
</feature>
<feature type="repeat" description="ANK 6">
    <location>
        <begin position="180"/>
        <end position="208"/>
    </location>
</feature>
<feature type="repeat" description="ANK 7">
    <location>
        <begin position="213"/>
        <end position="242"/>
    </location>
</feature>
<feature type="domain" description="SOCS box" evidence="4">
    <location>
        <begin position="265"/>
        <end position="318"/>
    </location>
</feature>
<gene>
    <name type="primary">ASB7</name>
</gene>
<proteinExistence type="evidence at transcript level"/>
<organism>
    <name type="scientific">Pongo abelii</name>
    <name type="common">Sumatran orangutan</name>
    <name type="synonym">Pongo pygmaeus abelii</name>
    <dbReference type="NCBI Taxonomy" id="9601"/>
    <lineage>
        <taxon>Eukaryota</taxon>
        <taxon>Metazoa</taxon>
        <taxon>Chordata</taxon>
        <taxon>Craniata</taxon>
        <taxon>Vertebrata</taxon>
        <taxon>Euteleostomi</taxon>
        <taxon>Mammalia</taxon>
        <taxon>Eutheria</taxon>
        <taxon>Euarchontoglires</taxon>
        <taxon>Primates</taxon>
        <taxon>Haplorrhini</taxon>
        <taxon>Catarrhini</taxon>
        <taxon>Hominidae</taxon>
        <taxon>Pongo</taxon>
    </lineage>
</organism>
<dbReference type="EMBL" id="CR858265">
    <property type="protein sequence ID" value="CAH90502.1"/>
    <property type="molecule type" value="mRNA"/>
</dbReference>
<dbReference type="RefSeq" id="NP_001128966.1">
    <property type="nucleotide sequence ID" value="NM_001135494.1"/>
</dbReference>
<dbReference type="SMR" id="Q5RCK5"/>
<dbReference type="STRING" id="9601.ENSPPYP00000007739"/>
<dbReference type="GeneID" id="100190806"/>
<dbReference type="KEGG" id="pon:100190806"/>
<dbReference type="CTD" id="140460"/>
<dbReference type="eggNOG" id="KOG4177">
    <property type="taxonomic scope" value="Eukaryota"/>
</dbReference>
<dbReference type="InParanoid" id="Q5RCK5"/>
<dbReference type="OrthoDB" id="539213at2759"/>
<dbReference type="UniPathway" id="UPA00143"/>
<dbReference type="Proteomes" id="UP000001595">
    <property type="component" value="Unplaced"/>
</dbReference>
<dbReference type="GO" id="GO:0035556">
    <property type="term" value="P:intracellular signal transduction"/>
    <property type="evidence" value="ECO:0007669"/>
    <property type="project" value="InterPro"/>
</dbReference>
<dbReference type="GO" id="GO:0016567">
    <property type="term" value="P:protein ubiquitination"/>
    <property type="evidence" value="ECO:0007669"/>
    <property type="project" value="UniProtKB-UniPathway"/>
</dbReference>
<dbReference type="CDD" id="cd03726">
    <property type="entry name" value="SOCS_ASB7"/>
    <property type="match status" value="1"/>
</dbReference>
<dbReference type="FunFam" id="1.10.750.20:FF:000004">
    <property type="entry name" value="Ankyrin repeat and SOCS box containing 7"/>
    <property type="match status" value="1"/>
</dbReference>
<dbReference type="FunFam" id="1.25.40.20:FF:000147">
    <property type="entry name" value="Ankyrin repeat and SOCS box containing 7"/>
    <property type="match status" value="1"/>
</dbReference>
<dbReference type="Gene3D" id="1.25.40.20">
    <property type="entry name" value="Ankyrin repeat-containing domain"/>
    <property type="match status" value="3"/>
</dbReference>
<dbReference type="Gene3D" id="1.10.750.20">
    <property type="entry name" value="SOCS box"/>
    <property type="match status" value="1"/>
</dbReference>
<dbReference type="InterPro" id="IPR002110">
    <property type="entry name" value="Ankyrin_rpt"/>
</dbReference>
<dbReference type="InterPro" id="IPR036770">
    <property type="entry name" value="Ankyrin_rpt-contain_sf"/>
</dbReference>
<dbReference type="InterPro" id="IPR037326">
    <property type="entry name" value="ASB7_SOCS"/>
</dbReference>
<dbReference type="InterPro" id="IPR001496">
    <property type="entry name" value="SOCS_box"/>
</dbReference>
<dbReference type="InterPro" id="IPR036036">
    <property type="entry name" value="SOCS_box-like_dom_sf"/>
</dbReference>
<dbReference type="PANTHER" id="PTHR24173:SF88">
    <property type="entry name" value="ANKYRIN REPEAT AND SOCS BOX CONTAINING 7"/>
    <property type="match status" value="1"/>
</dbReference>
<dbReference type="PANTHER" id="PTHR24173">
    <property type="entry name" value="ANKYRIN REPEAT CONTAINING"/>
    <property type="match status" value="1"/>
</dbReference>
<dbReference type="Pfam" id="PF12796">
    <property type="entry name" value="Ank_2"/>
    <property type="match status" value="3"/>
</dbReference>
<dbReference type="Pfam" id="PF07525">
    <property type="entry name" value="SOCS_box"/>
    <property type="match status" value="1"/>
</dbReference>
<dbReference type="PRINTS" id="PR01415">
    <property type="entry name" value="ANKYRIN"/>
</dbReference>
<dbReference type="SMART" id="SM00248">
    <property type="entry name" value="ANK"/>
    <property type="match status" value="7"/>
</dbReference>
<dbReference type="SMART" id="SM00253">
    <property type="entry name" value="SOCS"/>
    <property type="match status" value="1"/>
</dbReference>
<dbReference type="SMART" id="SM00969">
    <property type="entry name" value="SOCS_box"/>
    <property type="match status" value="1"/>
</dbReference>
<dbReference type="SUPFAM" id="SSF48403">
    <property type="entry name" value="Ankyrin repeat"/>
    <property type="match status" value="1"/>
</dbReference>
<dbReference type="SUPFAM" id="SSF158235">
    <property type="entry name" value="SOCS box-like"/>
    <property type="match status" value="1"/>
</dbReference>
<dbReference type="PROSITE" id="PS50297">
    <property type="entry name" value="ANK_REP_REGION"/>
    <property type="match status" value="1"/>
</dbReference>
<dbReference type="PROSITE" id="PS50088">
    <property type="entry name" value="ANK_REPEAT"/>
    <property type="match status" value="5"/>
</dbReference>
<dbReference type="PROSITE" id="PS50225">
    <property type="entry name" value="SOCS"/>
    <property type="match status" value="1"/>
</dbReference>
<evidence type="ECO:0000250" key="1"/>
<evidence type="ECO:0000250" key="2">
    <source>
        <dbReference type="UniProtKB" id="Q91ZU0"/>
    </source>
</evidence>
<evidence type="ECO:0000250" key="3">
    <source>
        <dbReference type="UniProtKB" id="Q9H672"/>
    </source>
</evidence>
<evidence type="ECO:0000255" key="4">
    <source>
        <dbReference type="PROSITE-ProRule" id="PRU00194"/>
    </source>
</evidence>
<evidence type="ECO:0000305" key="5"/>
<comment type="function">
    <text evidence="2 3">Probable substrate-recognition component of a SCF-like ECS (Elongin-Cullin-SOCS-box protein) E3 ubiquitin-protein ligase complex which mediates the ubiquitination and subsequent proteasomal degradation of target proteins. Plays a role in spindle dynamics and genome integrity by targeting the mitotic progression protein PSRC1 for proteasomal degradation in a cell cycle-dependent manner (By similarity). Also participates in meiosis by mediating the proper attachment between kinetochores and microtubules (By similarity).</text>
</comment>
<comment type="pathway">
    <text>Protein modification; protein ubiquitination.</text>
</comment>
<comment type="subunit">
    <text evidence="3">Interacts with CUL5. Interacts with RNF7. Interacts with PSRC1.</text>
</comment>
<comment type="domain">
    <text evidence="1">The SOCS box domain mediates the interaction with the Elongin BC complex, an adapter module in different E3 ubiquitin-protein ligase complexes.</text>
</comment>
<comment type="similarity">
    <text evidence="5">Belongs to the ankyrin SOCS box (ASB) family.</text>
</comment>